<sequence length="187" mass="22553">MQRLWVTGYRSYELNTFSDNDPKIAVVKYVLKRRFVDLIEEGQLDWIITGANLGVEQWAAEVGLELSQRYPIRTSIMVPYENFADRWNENNQSKFLNLKESVDFFASTSDRPYYNSVQLRNYQNFMIQHTDRAIMIYDLEHPGKPKYDYNLIQKYQETKEYPLDLIDFYELQDMAEEYQENRKNDMY</sequence>
<keyword id="KW-1185">Reference proteome</keyword>
<protein>
    <recommendedName>
        <fullName evidence="1">UPF0398 protein LBA1157</fullName>
    </recommendedName>
</protein>
<dbReference type="EMBL" id="CP000033">
    <property type="protein sequence ID" value="AAV42996.1"/>
    <property type="molecule type" value="Genomic_DNA"/>
</dbReference>
<dbReference type="RefSeq" id="WP_003547535.1">
    <property type="nucleotide sequence ID" value="NC_006814.3"/>
</dbReference>
<dbReference type="RefSeq" id="YP_194027.1">
    <property type="nucleotide sequence ID" value="NC_006814.3"/>
</dbReference>
<dbReference type="SMR" id="Q5FJX8"/>
<dbReference type="STRING" id="272621.LBA1157"/>
<dbReference type="KEGG" id="lac:LBA1157"/>
<dbReference type="PATRIC" id="fig|272621.13.peg.1099"/>
<dbReference type="eggNOG" id="COG4474">
    <property type="taxonomic scope" value="Bacteria"/>
</dbReference>
<dbReference type="HOGENOM" id="CLU_105319_0_0_9"/>
<dbReference type="OrthoDB" id="2301957at2"/>
<dbReference type="BioCyc" id="LACI272621:G1G49-1147-MONOMER"/>
<dbReference type="Proteomes" id="UP000006381">
    <property type="component" value="Chromosome"/>
</dbReference>
<dbReference type="Gene3D" id="3.40.50.450">
    <property type="match status" value="1"/>
</dbReference>
<dbReference type="HAMAP" id="MF_01575">
    <property type="entry name" value="UPF0398"/>
    <property type="match status" value="1"/>
</dbReference>
<dbReference type="InterPro" id="IPR010697">
    <property type="entry name" value="YspA"/>
</dbReference>
<dbReference type="NCBIfam" id="NF010181">
    <property type="entry name" value="PRK13660.1"/>
    <property type="match status" value="1"/>
</dbReference>
<dbReference type="PANTHER" id="PTHR38440:SF1">
    <property type="entry name" value="UPF0398 PROTEIN SPR0331"/>
    <property type="match status" value="1"/>
</dbReference>
<dbReference type="PANTHER" id="PTHR38440">
    <property type="entry name" value="UPF0398 PROTEIN YPSA"/>
    <property type="match status" value="1"/>
</dbReference>
<dbReference type="Pfam" id="PF06908">
    <property type="entry name" value="YpsA"/>
    <property type="match status" value="1"/>
</dbReference>
<dbReference type="PIRSF" id="PIRSF021290">
    <property type="entry name" value="DUF1273"/>
    <property type="match status" value="1"/>
</dbReference>
<dbReference type="SUPFAM" id="SSF102405">
    <property type="entry name" value="MCP/YpsA-like"/>
    <property type="match status" value="1"/>
</dbReference>
<accession>Q5FJX8</accession>
<organism>
    <name type="scientific">Lactobacillus acidophilus (strain ATCC 700396 / NCK56 / N2 / NCFM)</name>
    <dbReference type="NCBI Taxonomy" id="272621"/>
    <lineage>
        <taxon>Bacteria</taxon>
        <taxon>Bacillati</taxon>
        <taxon>Bacillota</taxon>
        <taxon>Bacilli</taxon>
        <taxon>Lactobacillales</taxon>
        <taxon>Lactobacillaceae</taxon>
        <taxon>Lactobacillus</taxon>
    </lineage>
</organism>
<proteinExistence type="inferred from homology"/>
<reference key="1">
    <citation type="journal article" date="2005" name="Proc. Natl. Acad. Sci. U.S.A.">
        <title>Complete genome sequence of the probiotic lactic acid bacterium Lactobacillus acidophilus NCFM.</title>
        <authorList>
            <person name="Altermann E."/>
            <person name="Russell W.M."/>
            <person name="Azcarate-Peril M.A."/>
            <person name="Barrangou R."/>
            <person name="Buck B.L."/>
            <person name="McAuliffe O."/>
            <person name="Souther N."/>
            <person name="Dobson A."/>
            <person name="Duong T."/>
            <person name="Callanan M."/>
            <person name="Lick S."/>
            <person name="Hamrick A."/>
            <person name="Cano R."/>
            <person name="Klaenhammer T.R."/>
        </authorList>
    </citation>
    <scope>NUCLEOTIDE SEQUENCE [LARGE SCALE GENOMIC DNA]</scope>
    <source>
        <strain>ATCC 700396 / NCK56 / N2 / NCFM</strain>
    </source>
</reference>
<name>Y1157_LACAC</name>
<gene>
    <name type="ordered locus">LBA1157</name>
</gene>
<comment type="similarity">
    <text evidence="1">Belongs to the UPF0398 family.</text>
</comment>
<evidence type="ECO:0000255" key="1">
    <source>
        <dbReference type="HAMAP-Rule" id="MF_01575"/>
    </source>
</evidence>
<feature type="chain" id="PRO_0000267157" description="UPF0398 protein LBA1157">
    <location>
        <begin position="1"/>
        <end position="187"/>
    </location>
</feature>